<feature type="chain" id="PRO_0000275015" description="NADH-ubiquinone oxidoreductase chain 4L">
    <location>
        <begin position="1"/>
        <end position="98"/>
    </location>
</feature>
<feature type="transmembrane region" description="Helical" evidence="3">
    <location>
        <begin position="1"/>
        <end position="21"/>
    </location>
</feature>
<feature type="transmembrane region" description="Helical" evidence="3">
    <location>
        <begin position="29"/>
        <end position="49"/>
    </location>
</feature>
<feature type="transmembrane region" description="Helical" evidence="3">
    <location>
        <begin position="61"/>
        <end position="81"/>
    </location>
</feature>
<protein>
    <recommendedName>
        <fullName>NADH-ubiquinone oxidoreductase chain 4L</fullName>
        <ecNumber>7.1.1.2</ecNumber>
    </recommendedName>
    <alternativeName>
        <fullName>NADH dehydrogenase subunit 4L</fullName>
    </alternativeName>
</protein>
<proteinExistence type="inferred from homology"/>
<dbReference type="EC" id="7.1.1.2"/>
<dbReference type="EMBL" id="AY398626">
    <property type="protein sequence ID" value="AAR33059.1"/>
    <property type="molecule type" value="Genomic_DNA"/>
</dbReference>
<dbReference type="SMR" id="Q69B80"/>
<dbReference type="GO" id="GO:0005743">
    <property type="term" value="C:mitochondrial inner membrane"/>
    <property type="evidence" value="ECO:0000250"/>
    <property type="project" value="UniProtKB"/>
</dbReference>
<dbReference type="GO" id="GO:0045271">
    <property type="term" value="C:respiratory chain complex I"/>
    <property type="evidence" value="ECO:0000250"/>
    <property type="project" value="UniProtKB"/>
</dbReference>
<dbReference type="GO" id="GO:0008137">
    <property type="term" value="F:NADH dehydrogenase (ubiquinone) activity"/>
    <property type="evidence" value="ECO:0000250"/>
    <property type="project" value="UniProtKB"/>
</dbReference>
<dbReference type="GO" id="GO:0042773">
    <property type="term" value="P:ATP synthesis coupled electron transport"/>
    <property type="evidence" value="ECO:0007669"/>
    <property type="project" value="InterPro"/>
</dbReference>
<dbReference type="FunFam" id="1.10.287.3510:FF:000002">
    <property type="entry name" value="NADH-ubiquinone oxidoreductase chain 4L"/>
    <property type="match status" value="1"/>
</dbReference>
<dbReference type="Gene3D" id="1.10.287.3510">
    <property type="match status" value="1"/>
</dbReference>
<dbReference type="InterPro" id="IPR001133">
    <property type="entry name" value="NADH_UbQ_OxRdtase_chain4L/K"/>
</dbReference>
<dbReference type="InterPro" id="IPR039428">
    <property type="entry name" value="NUOK/Mnh_C1-like"/>
</dbReference>
<dbReference type="PANTHER" id="PTHR11434:SF0">
    <property type="entry name" value="NADH-UBIQUINONE OXIDOREDUCTASE CHAIN 4L"/>
    <property type="match status" value="1"/>
</dbReference>
<dbReference type="PANTHER" id="PTHR11434">
    <property type="entry name" value="NADH-UBIQUINONE OXIDOREDUCTASE SUBUNIT ND4L"/>
    <property type="match status" value="1"/>
</dbReference>
<dbReference type="Pfam" id="PF00420">
    <property type="entry name" value="Oxidored_q2"/>
    <property type="match status" value="1"/>
</dbReference>
<geneLocation type="mitochondrion"/>
<sequence>MTLIHMNIIMAFSMSLVGLLMYRSHLMSALLCLEGMMLSLFVLAALTILNSHFTLANMMPIILLVFAACEAAIGLALLVTISNTYGTDYVQNLNLLQC</sequence>
<reference key="1">
    <citation type="journal article" date="2004" name="Mol. Phylogenet. Evol.">
        <title>Phylogeny of mysticete whales based on mitochondrial and nuclear data.</title>
        <authorList>
            <person name="Rychel A.L."/>
            <person name="Reeder T.W."/>
            <person name="Berta A."/>
        </authorList>
    </citation>
    <scope>NUCLEOTIDE SEQUENCE [GENOMIC DNA]</scope>
</reference>
<accession>Q69B80</accession>
<gene>
    <name type="primary">MT-ND4L</name>
    <name type="synonym">MTND4L</name>
    <name type="synonym">NADH4L</name>
    <name type="synonym">ND4L</name>
</gene>
<comment type="function">
    <text evidence="1">Core subunit of the mitochondrial membrane respiratory chain NADH dehydrogenase (Complex I) which catalyzes electron transfer from NADH through the respiratory chain, using ubiquinone as an electron acceptor. Part of the enzyme membrane arm which is embedded in the lipid bilayer and involved in proton translocation.</text>
</comment>
<comment type="catalytic activity">
    <reaction evidence="1">
        <text>a ubiquinone + NADH + 5 H(+)(in) = a ubiquinol + NAD(+) + 4 H(+)(out)</text>
        <dbReference type="Rhea" id="RHEA:29091"/>
        <dbReference type="Rhea" id="RHEA-COMP:9565"/>
        <dbReference type="Rhea" id="RHEA-COMP:9566"/>
        <dbReference type="ChEBI" id="CHEBI:15378"/>
        <dbReference type="ChEBI" id="CHEBI:16389"/>
        <dbReference type="ChEBI" id="CHEBI:17976"/>
        <dbReference type="ChEBI" id="CHEBI:57540"/>
        <dbReference type="ChEBI" id="CHEBI:57945"/>
        <dbReference type="EC" id="7.1.1.2"/>
    </reaction>
    <physiologicalReaction direction="left-to-right" evidence="1">
        <dbReference type="Rhea" id="RHEA:29092"/>
    </physiologicalReaction>
</comment>
<comment type="subunit">
    <text evidence="2">Core subunit of respiratory chain NADH dehydrogenase (Complex I) which is composed of 45 different subunits.</text>
</comment>
<comment type="subcellular location">
    <subcellularLocation>
        <location evidence="2">Mitochondrion inner membrane</location>
        <topology evidence="3">Multi-pass membrane protein</topology>
    </subcellularLocation>
</comment>
<comment type="similarity">
    <text evidence="4">Belongs to the complex I subunit 4L family.</text>
</comment>
<evidence type="ECO:0000250" key="1">
    <source>
        <dbReference type="UniProtKB" id="P03901"/>
    </source>
</evidence>
<evidence type="ECO:0000250" key="2">
    <source>
        <dbReference type="UniProtKB" id="P03902"/>
    </source>
</evidence>
<evidence type="ECO:0000255" key="3"/>
<evidence type="ECO:0000305" key="4"/>
<organism>
    <name type="scientific">Eubalaena glacialis</name>
    <name type="common">North Atlantic right whale</name>
    <name type="synonym">Balaena biscayensis</name>
    <dbReference type="NCBI Taxonomy" id="27606"/>
    <lineage>
        <taxon>Eukaryota</taxon>
        <taxon>Metazoa</taxon>
        <taxon>Chordata</taxon>
        <taxon>Craniata</taxon>
        <taxon>Vertebrata</taxon>
        <taxon>Euteleostomi</taxon>
        <taxon>Mammalia</taxon>
        <taxon>Eutheria</taxon>
        <taxon>Laurasiatheria</taxon>
        <taxon>Artiodactyla</taxon>
        <taxon>Whippomorpha</taxon>
        <taxon>Cetacea</taxon>
        <taxon>Mysticeti</taxon>
        <taxon>Balaenidae</taxon>
        <taxon>Eubalaena</taxon>
    </lineage>
</organism>
<name>NU4LM_EUBGL</name>
<keyword id="KW-0249">Electron transport</keyword>
<keyword id="KW-0472">Membrane</keyword>
<keyword id="KW-0496">Mitochondrion</keyword>
<keyword id="KW-0999">Mitochondrion inner membrane</keyword>
<keyword id="KW-0520">NAD</keyword>
<keyword id="KW-0679">Respiratory chain</keyword>
<keyword id="KW-1278">Translocase</keyword>
<keyword id="KW-0812">Transmembrane</keyword>
<keyword id="KW-1133">Transmembrane helix</keyword>
<keyword id="KW-0813">Transport</keyword>
<keyword id="KW-0830">Ubiquinone</keyword>